<evidence type="ECO:0000250" key="1"/>
<evidence type="ECO:0000255" key="2">
    <source>
        <dbReference type="PROSITE-ProRule" id="PRU10023"/>
    </source>
</evidence>
<evidence type="ECO:0000305" key="3"/>
<sequence>MAAAVTVEEVRRAQRAEGPATVLAIGTATPANCVYQADYPDYYFRITKSEHMVELKEKFKRMCDKSQIRKRYMHLTEEILQENPNMCAYMAPSLDARQDIVVVEVPKLGKAAAQKAIKEWGQPRSRITHLVFCTTSGVDMPGADYQLAKMLGLRPNVNRLMMYQQGCFAGGTVLRVAKDLAENNRGARVLAVCSEITAVTFRGPSESHLDSMVGQALFGDGAAAVIVGSDPDEAVERPLFQMVSASQTILPDSEGAIDGHLREVGLTFHLLKDVPGLISKNIERALGDAFTPLGISDWNSIFWVAHPGGPAILDQVEAKVGLDKERMRATRHVLSEYGNMSSACVLFILDEMRKRSAEDGHATTGEGMDWGVLFGFGPGLTVETVVLHSVPITAGAAA</sequence>
<proteinExistence type="evidence at transcript level"/>
<reference key="1">
    <citation type="submission" date="2001-03" db="EMBL/GenBank/DDBJ databases">
        <title>Sequence analysis and some characterization of single-copied chalcone synthase from rice.</title>
        <authorList>
            <person name="Minami E."/>
            <person name="He D."/>
            <person name="Minami N."/>
            <person name="Shibuya N."/>
        </authorList>
    </citation>
    <scope>NUCLEOTIDE SEQUENCE [MRNA]</scope>
    <source>
        <strain>cv. Nipponbare</strain>
        <tissue>Leaf</tissue>
    </source>
</reference>
<reference key="2">
    <citation type="submission" date="2001-03" db="EMBL/GenBank/DDBJ databases">
        <title>Molecular cloning and characterization of chalcone synthase (CHS) gene from rice (Oryza sativa L).</title>
        <authorList>
            <person name="Ichikawa H."/>
            <person name="Okano E."/>
            <person name="Shimizu T."/>
            <person name="Nakamura S."/>
            <person name="Kawasaki S."/>
            <person name="Minami E."/>
        </authorList>
    </citation>
    <scope>NUCLEOTIDE SEQUENCE [GENOMIC DNA]</scope>
    <source>
        <strain>cv. Nipponbare</strain>
    </source>
</reference>
<reference key="3">
    <citation type="journal article" date="2005" name="BMC Biol.">
        <title>The sequence of rice chromosomes 11 and 12, rich in disease resistance genes and recent gene duplications.</title>
        <authorList>
            <consortium name="The rice chromosomes 11 and 12 sequencing consortia"/>
        </authorList>
    </citation>
    <scope>NUCLEOTIDE SEQUENCE [LARGE SCALE GENOMIC DNA]</scope>
    <source>
        <strain>cv. Nipponbare</strain>
    </source>
</reference>
<reference key="4">
    <citation type="journal article" date="2005" name="Nature">
        <title>The map-based sequence of the rice genome.</title>
        <authorList>
            <consortium name="International rice genome sequencing project (IRGSP)"/>
        </authorList>
    </citation>
    <scope>NUCLEOTIDE SEQUENCE [LARGE SCALE GENOMIC DNA]</scope>
    <source>
        <strain>cv. Nipponbare</strain>
    </source>
</reference>
<reference key="5">
    <citation type="journal article" date="2008" name="Nucleic Acids Res.">
        <title>The rice annotation project database (RAP-DB): 2008 update.</title>
        <authorList>
            <consortium name="The rice annotation project (RAP)"/>
        </authorList>
    </citation>
    <scope>GENOME REANNOTATION</scope>
    <source>
        <strain>cv. Nipponbare</strain>
    </source>
</reference>
<reference key="6">
    <citation type="journal article" date="2013" name="Rice">
        <title>Improvement of the Oryza sativa Nipponbare reference genome using next generation sequence and optical map data.</title>
        <authorList>
            <person name="Kawahara Y."/>
            <person name="de la Bastide M."/>
            <person name="Hamilton J.P."/>
            <person name="Kanamori H."/>
            <person name="McCombie W.R."/>
            <person name="Ouyang S."/>
            <person name="Schwartz D.C."/>
            <person name="Tanaka T."/>
            <person name="Wu J."/>
            <person name="Zhou S."/>
            <person name="Childs K.L."/>
            <person name="Davidson R.M."/>
            <person name="Lin H."/>
            <person name="Quesada-Ocampo L."/>
            <person name="Vaillancourt B."/>
            <person name="Sakai H."/>
            <person name="Lee S.S."/>
            <person name="Kim J."/>
            <person name="Numa H."/>
            <person name="Itoh T."/>
            <person name="Buell C.R."/>
            <person name="Matsumoto T."/>
        </authorList>
    </citation>
    <scope>GENOME REANNOTATION</scope>
    <source>
        <strain>cv. Nipponbare</strain>
    </source>
</reference>
<reference key="7">
    <citation type="journal article" date="2005" name="PLoS Biol.">
        <title>The genomes of Oryza sativa: a history of duplications.</title>
        <authorList>
            <person name="Yu J."/>
            <person name="Wang J."/>
            <person name="Lin W."/>
            <person name="Li S."/>
            <person name="Li H."/>
            <person name="Zhou J."/>
            <person name="Ni P."/>
            <person name="Dong W."/>
            <person name="Hu S."/>
            <person name="Zeng C."/>
            <person name="Zhang J."/>
            <person name="Zhang Y."/>
            <person name="Li R."/>
            <person name="Xu Z."/>
            <person name="Li S."/>
            <person name="Li X."/>
            <person name="Zheng H."/>
            <person name="Cong L."/>
            <person name="Lin L."/>
            <person name="Yin J."/>
            <person name="Geng J."/>
            <person name="Li G."/>
            <person name="Shi J."/>
            <person name="Liu J."/>
            <person name="Lv H."/>
            <person name="Li J."/>
            <person name="Wang J."/>
            <person name="Deng Y."/>
            <person name="Ran L."/>
            <person name="Shi X."/>
            <person name="Wang X."/>
            <person name="Wu Q."/>
            <person name="Li C."/>
            <person name="Ren X."/>
            <person name="Wang J."/>
            <person name="Wang X."/>
            <person name="Li D."/>
            <person name="Liu D."/>
            <person name="Zhang X."/>
            <person name="Ji Z."/>
            <person name="Zhao W."/>
            <person name="Sun Y."/>
            <person name="Zhang Z."/>
            <person name="Bao J."/>
            <person name="Han Y."/>
            <person name="Dong L."/>
            <person name="Ji J."/>
            <person name="Chen P."/>
            <person name="Wu S."/>
            <person name="Liu J."/>
            <person name="Xiao Y."/>
            <person name="Bu D."/>
            <person name="Tan J."/>
            <person name="Yang L."/>
            <person name="Ye C."/>
            <person name="Zhang J."/>
            <person name="Xu J."/>
            <person name="Zhou Y."/>
            <person name="Yu Y."/>
            <person name="Zhang B."/>
            <person name="Zhuang S."/>
            <person name="Wei H."/>
            <person name="Liu B."/>
            <person name="Lei M."/>
            <person name="Yu H."/>
            <person name="Li Y."/>
            <person name="Xu H."/>
            <person name="Wei S."/>
            <person name="He X."/>
            <person name="Fang L."/>
            <person name="Zhang Z."/>
            <person name="Zhang Y."/>
            <person name="Huang X."/>
            <person name="Su Z."/>
            <person name="Tong W."/>
            <person name="Li J."/>
            <person name="Tong Z."/>
            <person name="Li S."/>
            <person name="Ye J."/>
            <person name="Wang L."/>
            <person name="Fang L."/>
            <person name="Lei T."/>
            <person name="Chen C.-S."/>
            <person name="Chen H.-C."/>
            <person name="Xu Z."/>
            <person name="Li H."/>
            <person name="Huang H."/>
            <person name="Zhang F."/>
            <person name="Xu H."/>
            <person name="Li N."/>
            <person name="Zhao C."/>
            <person name="Li S."/>
            <person name="Dong L."/>
            <person name="Huang Y."/>
            <person name="Li L."/>
            <person name="Xi Y."/>
            <person name="Qi Q."/>
            <person name="Li W."/>
            <person name="Zhang B."/>
            <person name="Hu W."/>
            <person name="Zhang Y."/>
            <person name="Tian X."/>
            <person name="Jiao Y."/>
            <person name="Liang X."/>
            <person name="Jin J."/>
            <person name="Gao L."/>
            <person name="Zheng W."/>
            <person name="Hao B."/>
            <person name="Liu S.-M."/>
            <person name="Wang W."/>
            <person name="Yuan L."/>
            <person name="Cao M."/>
            <person name="McDermott J."/>
            <person name="Samudrala R."/>
            <person name="Wang J."/>
            <person name="Wong G.K.-S."/>
            <person name="Yang H."/>
        </authorList>
    </citation>
    <scope>NUCLEOTIDE SEQUENCE [LARGE SCALE GENOMIC DNA]</scope>
    <source>
        <strain>cv. Nipponbare</strain>
    </source>
</reference>
<keyword id="KW-0012">Acyltransferase</keyword>
<keyword id="KW-0284">Flavonoid biosynthesis</keyword>
<keyword id="KW-1185">Reference proteome</keyword>
<keyword id="KW-0808">Transferase</keyword>
<protein>
    <recommendedName>
        <fullName>Chalcone synthase 1</fullName>
        <shortName>OsCHS1</shortName>
        <ecNumber>2.3.1.74</ecNumber>
    </recommendedName>
    <alternativeName>
        <fullName>Naregenin-chalcone synthase</fullName>
    </alternativeName>
</protein>
<gene>
    <name type="primary">CHS1</name>
    <name type="synonym">CHS</name>
    <name type="ordered locus">Os11g0530600</name>
    <name type="ordered locus">LOC_Os11g32650</name>
    <name type="ORF">OsJ_032788</name>
</gene>
<name>CHS1_ORYSJ</name>
<organism>
    <name type="scientific">Oryza sativa subsp. japonica</name>
    <name type="common">Rice</name>
    <dbReference type="NCBI Taxonomy" id="39947"/>
    <lineage>
        <taxon>Eukaryota</taxon>
        <taxon>Viridiplantae</taxon>
        <taxon>Streptophyta</taxon>
        <taxon>Embryophyta</taxon>
        <taxon>Tracheophyta</taxon>
        <taxon>Spermatophyta</taxon>
        <taxon>Magnoliopsida</taxon>
        <taxon>Liliopsida</taxon>
        <taxon>Poales</taxon>
        <taxon>Poaceae</taxon>
        <taxon>BOP clade</taxon>
        <taxon>Oryzoideae</taxon>
        <taxon>Oryzeae</taxon>
        <taxon>Oryzinae</taxon>
        <taxon>Oryza</taxon>
        <taxon>Oryza sativa</taxon>
    </lineage>
</organism>
<accession>Q2R3A1</accession>
<accession>A0A0P0Y338</accession>
<accession>P48405</accession>
<accession>P93710</accession>
<accession>Q9AVC2</accession>
<feature type="chain" id="PRO_0000216017" description="Chalcone synthase 1">
    <location>
        <begin position="1"/>
        <end position="398"/>
    </location>
</feature>
<feature type="active site" description="Acyl-thioester intermediate" evidence="2">
    <location>
        <position position="167"/>
    </location>
</feature>
<feature type="binding site" evidence="1">
    <location>
        <begin position="58"/>
        <end position="65"/>
    </location>
    <ligand>
        <name>CoA</name>
        <dbReference type="ChEBI" id="CHEBI:57287"/>
    </ligand>
</feature>
<feature type="binding site" evidence="1">
    <location>
        <position position="200"/>
    </location>
    <ligand>
        <name>substrate</name>
    </ligand>
</feature>
<feature type="binding site" evidence="1">
    <location>
        <begin position="219"/>
        <end position="220"/>
    </location>
    <ligand>
        <name>substrate</name>
    </ligand>
</feature>
<feature type="binding site" evidence="1">
    <location>
        <position position="311"/>
    </location>
    <ligand>
        <name>CoA</name>
        <dbReference type="ChEBI" id="CHEBI:57287"/>
    </ligand>
</feature>
<dbReference type="EC" id="2.3.1.74"/>
<dbReference type="EMBL" id="AB000801">
    <property type="protein sequence ID" value="BAA19186.2"/>
    <property type="molecule type" value="mRNA"/>
</dbReference>
<dbReference type="EMBL" id="AB058397">
    <property type="protein sequence ID" value="BAB39764.1"/>
    <property type="molecule type" value="Genomic_DNA"/>
</dbReference>
<dbReference type="EMBL" id="DP000010">
    <property type="protein sequence ID" value="ABA94123.1"/>
    <property type="molecule type" value="Genomic_DNA"/>
</dbReference>
<dbReference type="EMBL" id="AP008217">
    <property type="protein sequence ID" value="BAF28372.1"/>
    <property type="molecule type" value="Genomic_DNA"/>
</dbReference>
<dbReference type="EMBL" id="AP014967">
    <property type="protein sequence ID" value="BAT14279.1"/>
    <property type="molecule type" value="Genomic_DNA"/>
</dbReference>
<dbReference type="EMBL" id="CM000148">
    <property type="protein sequence ID" value="EAZ18579.1"/>
    <property type="molecule type" value="Genomic_DNA"/>
</dbReference>
<dbReference type="RefSeq" id="XP_015618054.1">
    <property type="nucleotide sequence ID" value="XM_015762568.1"/>
</dbReference>
<dbReference type="SMR" id="Q2R3A1"/>
<dbReference type="FunCoup" id="Q2R3A1">
    <property type="interactions" value="58"/>
</dbReference>
<dbReference type="STRING" id="39947.Q2R3A1"/>
<dbReference type="PaxDb" id="39947-Q2R3A1"/>
<dbReference type="EnsemblPlants" id="Os11t0530600-01">
    <property type="protein sequence ID" value="Os11t0530600-01"/>
    <property type="gene ID" value="Os11g0530600"/>
</dbReference>
<dbReference type="Gramene" id="Os11t0530600-01">
    <property type="protein sequence ID" value="Os11t0530600-01"/>
    <property type="gene ID" value="Os11g0530600"/>
</dbReference>
<dbReference type="KEGG" id="dosa:Os11g0530600"/>
<dbReference type="eggNOG" id="ENOG502QRSY">
    <property type="taxonomic scope" value="Eukaryota"/>
</dbReference>
<dbReference type="HOGENOM" id="CLU_034992_2_0_1"/>
<dbReference type="InParanoid" id="Q2R3A1"/>
<dbReference type="OMA" id="HGWQDRM"/>
<dbReference type="OrthoDB" id="1529441at2759"/>
<dbReference type="PlantReactome" id="R-OSA-1119531">
    <property type="pathway name" value="Flavonoid biosynthesis"/>
</dbReference>
<dbReference type="UniPathway" id="UPA00154"/>
<dbReference type="Proteomes" id="UP000000763">
    <property type="component" value="Chromosome 11"/>
</dbReference>
<dbReference type="Proteomes" id="UP000007752">
    <property type="component" value="Chromosome 11"/>
</dbReference>
<dbReference type="Proteomes" id="UP000059680">
    <property type="component" value="Chromosome 11"/>
</dbReference>
<dbReference type="GO" id="GO:0016747">
    <property type="term" value="F:acyltransferase activity, transferring groups other than amino-acyl groups"/>
    <property type="evidence" value="ECO:0000318"/>
    <property type="project" value="GO_Central"/>
</dbReference>
<dbReference type="GO" id="GO:0016210">
    <property type="term" value="F:naringenin-chalcone synthase activity"/>
    <property type="evidence" value="ECO:0007669"/>
    <property type="project" value="UniProtKB-EC"/>
</dbReference>
<dbReference type="GO" id="GO:0009813">
    <property type="term" value="P:flavonoid biosynthetic process"/>
    <property type="evidence" value="ECO:0007669"/>
    <property type="project" value="UniProtKB-UniPathway"/>
</dbReference>
<dbReference type="GO" id="GO:0030639">
    <property type="term" value="P:polyketide biosynthetic process"/>
    <property type="evidence" value="ECO:0000318"/>
    <property type="project" value="GO_Central"/>
</dbReference>
<dbReference type="CDD" id="cd00831">
    <property type="entry name" value="CHS_like"/>
    <property type="match status" value="1"/>
</dbReference>
<dbReference type="FunFam" id="3.40.47.10:FF:000014">
    <property type="entry name" value="Chalcone synthase 1"/>
    <property type="match status" value="1"/>
</dbReference>
<dbReference type="FunFam" id="3.40.47.10:FF:000025">
    <property type="entry name" value="Chalcone synthase 2"/>
    <property type="match status" value="1"/>
</dbReference>
<dbReference type="Gene3D" id="3.40.47.10">
    <property type="match status" value="2"/>
</dbReference>
<dbReference type="InterPro" id="IPR012328">
    <property type="entry name" value="Chalcone/stilbene_synt_C"/>
</dbReference>
<dbReference type="InterPro" id="IPR001099">
    <property type="entry name" value="Chalcone/stilbene_synt_N"/>
</dbReference>
<dbReference type="InterPro" id="IPR018088">
    <property type="entry name" value="Chalcone/stilbene_synthase_AS"/>
</dbReference>
<dbReference type="InterPro" id="IPR011141">
    <property type="entry name" value="Polyketide_synthase_type-III"/>
</dbReference>
<dbReference type="InterPro" id="IPR016039">
    <property type="entry name" value="Thiolase-like"/>
</dbReference>
<dbReference type="PANTHER" id="PTHR11877:SF14">
    <property type="entry name" value="CHALCONE SYNTHASE"/>
    <property type="match status" value="1"/>
</dbReference>
<dbReference type="PANTHER" id="PTHR11877">
    <property type="entry name" value="HYDROXYMETHYLGLUTARYL-COA SYNTHASE"/>
    <property type="match status" value="1"/>
</dbReference>
<dbReference type="Pfam" id="PF02797">
    <property type="entry name" value="Chal_sti_synt_C"/>
    <property type="match status" value="1"/>
</dbReference>
<dbReference type="Pfam" id="PF00195">
    <property type="entry name" value="Chal_sti_synt_N"/>
    <property type="match status" value="1"/>
</dbReference>
<dbReference type="PIRSF" id="PIRSF000451">
    <property type="entry name" value="PKS_III"/>
    <property type="match status" value="1"/>
</dbReference>
<dbReference type="SUPFAM" id="SSF53901">
    <property type="entry name" value="Thiolase-like"/>
    <property type="match status" value="2"/>
</dbReference>
<dbReference type="PROSITE" id="PS00441">
    <property type="entry name" value="CHALCONE_SYNTH"/>
    <property type="match status" value="1"/>
</dbReference>
<comment type="function">
    <text>The primary product of this enzyme is 4,2',4',6'-tetrahydroxychalcone (also termed naringenin-chalcone or chalcone) which can under specific conditions spontaneously isomerize into naringenin.</text>
</comment>
<comment type="catalytic activity">
    <reaction evidence="2">
        <text>(E)-4-coumaroyl-CoA + 3 malonyl-CoA + 3 H(+) = 2',4,4',6'-tetrahydroxychalcone + 3 CO2 + 4 CoA</text>
        <dbReference type="Rhea" id="RHEA:11128"/>
        <dbReference type="ChEBI" id="CHEBI:15378"/>
        <dbReference type="ChEBI" id="CHEBI:15413"/>
        <dbReference type="ChEBI" id="CHEBI:16526"/>
        <dbReference type="ChEBI" id="CHEBI:57287"/>
        <dbReference type="ChEBI" id="CHEBI:57384"/>
        <dbReference type="ChEBI" id="CHEBI:85008"/>
        <dbReference type="EC" id="2.3.1.74"/>
    </reaction>
</comment>
<comment type="pathway">
    <text>Secondary metabolite biosynthesis; flavonoid biosynthesis.</text>
</comment>
<comment type="subunit">
    <text evidence="1">Homodimer.</text>
</comment>
<comment type="similarity">
    <text evidence="3">Belongs to the thiolase-like superfamily. Chalcone/stilbene synthases family.</text>
</comment>